<evidence type="ECO:0000255" key="1">
    <source>
        <dbReference type="HAMAP-Rule" id="MF_00626"/>
    </source>
</evidence>
<reference key="1">
    <citation type="journal article" date="2008" name="Chem. Biol. Interact.">
        <title>Extending the Bacillus cereus group genomics to putative food-borne pathogens of different toxicity.</title>
        <authorList>
            <person name="Lapidus A."/>
            <person name="Goltsman E."/>
            <person name="Auger S."/>
            <person name="Galleron N."/>
            <person name="Segurens B."/>
            <person name="Dossat C."/>
            <person name="Land M.L."/>
            <person name="Broussolle V."/>
            <person name="Brillard J."/>
            <person name="Guinebretiere M.-H."/>
            <person name="Sanchis V."/>
            <person name="Nguen-the C."/>
            <person name="Lereclus D."/>
            <person name="Richardson P."/>
            <person name="Wincker P."/>
            <person name="Weissenbach J."/>
            <person name="Ehrlich S.D."/>
            <person name="Sorokin A."/>
        </authorList>
    </citation>
    <scope>NUCLEOTIDE SEQUENCE [LARGE SCALE GENOMIC DNA]</scope>
    <source>
        <strain>DSM 22905 / CIP 110041 / 391-98 / NVH 391-98</strain>
    </source>
</reference>
<gene>
    <name evidence="1" type="primary">gpr</name>
    <name type="ordered locus">Bcer98_3048</name>
</gene>
<feature type="propeptide" id="PRO_1000082606" evidence="1">
    <location>
        <begin position="1"/>
        <end position="15"/>
    </location>
</feature>
<feature type="chain" id="PRO_1000082607" description="Germination protease">
    <location>
        <begin position="16"/>
        <end position="367"/>
    </location>
</feature>
<protein>
    <recommendedName>
        <fullName evidence="1">Germination protease</fullName>
        <ecNumber evidence="1">3.4.24.78</ecNumber>
    </recommendedName>
    <alternativeName>
        <fullName evidence="1">GPR endopeptidase</fullName>
    </alternativeName>
    <alternativeName>
        <fullName evidence="1">Germination proteinase</fullName>
    </alternativeName>
    <alternativeName>
        <fullName evidence="1">Spore protease</fullName>
    </alternativeName>
</protein>
<sequence>MKEPLDLSKYAVRTDLAVEAHQMLQERQQENTGIQGVIIKEREEEGMTITKVTIDESASEAMGKKAGNYLTLEVQGIRQQDTELQRKVERIFAKEFAYFLEEIGVKKEASCLIVGLGNWNVTPDALGPIVVENVLVTRHLFKLQPESVEDGYRPVSAIRPGVMGITGIETSDVIFGIIEKTKPDFVIAIDALAARSIERVNSTIQISDTGIHPGSGVGNKRKELSQETLGIPVIAIGVPTVVDAVSITSDTIDFILKHFGREMKEGDKPSRSLLPAGFTFGEKKKLTEEDMPDEKSRNMFLGAVGMLEEEEKRKLIYEVLAPLGHNLMVTPKEVDAFIEDMANVIASGLNAALHHQIDQDNTGAYTH</sequence>
<keyword id="KW-0378">Hydrolase</keyword>
<keyword id="KW-0645">Protease</keyword>
<keyword id="KW-0865">Zymogen</keyword>
<dbReference type="EC" id="3.4.24.78" evidence="1"/>
<dbReference type="EMBL" id="CP000764">
    <property type="protein sequence ID" value="ABS23274.1"/>
    <property type="molecule type" value="Genomic_DNA"/>
</dbReference>
<dbReference type="RefSeq" id="WP_012095512.1">
    <property type="nucleotide sequence ID" value="NC_009674.1"/>
</dbReference>
<dbReference type="SMR" id="A7GT16"/>
<dbReference type="STRING" id="315749.Bcer98_3048"/>
<dbReference type="MEROPS" id="A25.001"/>
<dbReference type="GeneID" id="33898294"/>
<dbReference type="KEGG" id="bcy:Bcer98_3048"/>
<dbReference type="eggNOG" id="COG0680">
    <property type="taxonomic scope" value="Bacteria"/>
</dbReference>
<dbReference type="HOGENOM" id="CLU_055087_1_0_9"/>
<dbReference type="OrthoDB" id="9777293at2"/>
<dbReference type="Proteomes" id="UP000002300">
    <property type="component" value="Chromosome"/>
</dbReference>
<dbReference type="GO" id="GO:0004222">
    <property type="term" value="F:metalloendopeptidase activity"/>
    <property type="evidence" value="ECO:0007669"/>
    <property type="project" value="UniProtKB-UniRule"/>
</dbReference>
<dbReference type="GO" id="GO:0006508">
    <property type="term" value="P:proteolysis"/>
    <property type="evidence" value="ECO:0007669"/>
    <property type="project" value="UniProtKB-UniRule"/>
</dbReference>
<dbReference type="GO" id="GO:0009847">
    <property type="term" value="P:spore germination"/>
    <property type="evidence" value="ECO:0007669"/>
    <property type="project" value="UniProtKB-UniRule"/>
</dbReference>
<dbReference type="Gene3D" id="3.40.50.1450">
    <property type="entry name" value="HybD-like"/>
    <property type="match status" value="1"/>
</dbReference>
<dbReference type="HAMAP" id="MF_00626">
    <property type="entry name" value="Germination_prot"/>
    <property type="match status" value="1"/>
</dbReference>
<dbReference type="InterPro" id="IPR023430">
    <property type="entry name" value="Pept_HybD-like_dom_sf"/>
</dbReference>
<dbReference type="InterPro" id="IPR005080">
    <property type="entry name" value="Peptidase_A25"/>
</dbReference>
<dbReference type="NCBIfam" id="TIGR01441">
    <property type="entry name" value="GPR"/>
    <property type="match status" value="1"/>
</dbReference>
<dbReference type="Pfam" id="PF03418">
    <property type="entry name" value="Peptidase_A25"/>
    <property type="match status" value="1"/>
</dbReference>
<dbReference type="PIRSF" id="PIRSF019549">
    <property type="entry name" value="Peptidase_A25"/>
    <property type="match status" value="1"/>
</dbReference>
<dbReference type="SUPFAM" id="SSF53163">
    <property type="entry name" value="HybD-like"/>
    <property type="match status" value="1"/>
</dbReference>
<accession>A7GT16</accession>
<organism>
    <name type="scientific">Bacillus cytotoxicus (strain DSM 22905 / CIP 110041 / 391-98 / NVH 391-98)</name>
    <dbReference type="NCBI Taxonomy" id="315749"/>
    <lineage>
        <taxon>Bacteria</taxon>
        <taxon>Bacillati</taxon>
        <taxon>Bacillota</taxon>
        <taxon>Bacilli</taxon>
        <taxon>Bacillales</taxon>
        <taxon>Bacillaceae</taxon>
        <taxon>Bacillus</taxon>
        <taxon>Bacillus cereus group</taxon>
    </lineage>
</organism>
<comment type="function">
    <text evidence="1">Initiates the rapid degradation of small, acid-soluble proteins during spore germination.</text>
</comment>
<comment type="catalytic activity">
    <reaction evidence="1">
        <text>Endopeptidase action with P4 Glu or Asp, P1 preferably Glu &gt; Asp, P1' hydrophobic and P2' Ala.</text>
        <dbReference type="EC" id="3.4.24.78"/>
    </reaction>
</comment>
<comment type="subunit">
    <text evidence="1">Homotetramer.</text>
</comment>
<comment type="PTM">
    <text evidence="1">Autoproteolytically processed. The inactive tetrameric zymogen termed p46 autoprocesses to a smaller form termed p41, which is active only during spore germination.</text>
</comment>
<comment type="similarity">
    <text evidence="1">Belongs to the peptidase A25 family.</text>
</comment>
<name>GPR_BACCN</name>
<proteinExistence type="inferred from homology"/>